<keyword id="KW-1185">Reference proteome</keyword>
<name>GLGS_ECOL6</name>
<sequence length="66" mass="7922">MDHSLNSLNNFDFLARSFARMHAEGRPVDILAVTGNMDEEHRTWFCARYAWYCQQMMQTRELELEH</sequence>
<evidence type="ECO:0000255" key="1">
    <source>
        <dbReference type="HAMAP-Rule" id="MF_00525"/>
    </source>
</evidence>
<evidence type="ECO:0000305" key="2"/>
<gene>
    <name type="primary">glgS</name>
    <name type="ordered locus">c3797</name>
</gene>
<organism>
    <name type="scientific">Escherichia coli O6:H1 (strain CFT073 / ATCC 700928 / UPEC)</name>
    <dbReference type="NCBI Taxonomy" id="199310"/>
    <lineage>
        <taxon>Bacteria</taxon>
        <taxon>Pseudomonadati</taxon>
        <taxon>Pseudomonadota</taxon>
        <taxon>Gammaproteobacteria</taxon>
        <taxon>Enterobacterales</taxon>
        <taxon>Enterobacteriaceae</taxon>
        <taxon>Escherichia</taxon>
    </lineage>
</organism>
<accession>P64243</accession>
<accession>P58613</accession>
<feature type="chain" id="PRO_0000071600" description="Surface composition regulator">
    <location>
        <begin position="1"/>
        <end position="66"/>
    </location>
</feature>
<comment type="function">
    <text evidence="1">Major determinant of cell surface composition. Negatively regulates motility, adhesion and synthesis of biofilm exopolysaccharides.</text>
</comment>
<comment type="similarity">
    <text evidence="1">Belongs to the GlgS family.</text>
</comment>
<comment type="sequence caution" evidence="2">
    <conflict type="erroneous initiation">
        <sequence resource="EMBL-CDS" id="AAN82242"/>
    </conflict>
</comment>
<dbReference type="EMBL" id="AE014075">
    <property type="protein sequence ID" value="AAN82242.1"/>
    <property type="status" value="ALT_INIT"/>
    <property type="molecule type" value="Genomic_DNA"/>
</dbReference>
<dbReference type="RefSeq" id="WP_001296424.1">
    <property type="nucleotide sequence ID" value="NZ_CP051263.1"/>
</dbReference>
<dbReference type="SMR" id="P64243"/>
<dbReference type="STRING" id="199310.c3797"/>
<dbReference type="GeneID" id="75173169"/>
<dbReference type="KEGG" id="ecc:c3797"/>
<dbReference type="eggNOG" id="ENOG5032ZQX">
    <property type="taxonomic scope" value="Bacteria"/>
</dbReference>
<dbReference type="HOGENOM" id="CLU_185971_0_0_6"/>
<dbReference type="Proteomes" id="UP000001410">
    <property type="component" value="Chromosome"/>
</dbReference>
<dbReference type="GO" id="GO:1902201">
    <property type="term" value="P:negative regulation of bacterial-type flagellum-dependent cell motility"/>
    <property type="evidence" value="ECO:0007669"/>
    <property type="project" value="UniProtKB-UniRule"/>
</dbReference>
<dbReference type="GO" id="GO:1900191">
    <property type="term" value="P:negative regulation of single-species biofilm formation"/>
    <property type="evidence" value="ECO:0007669"/>
    <property type="project" value="UniProtKB-UniRule"/>
</dbReference>
<dbReference type="FunFam" id="1.20.970.20:FF:000001">
    <property type="entry name" value="Surface composition regulator"/>
    <property type="match status" value="1"/>
</dbReference>
<dbReference type="Gene3D" id="1.20.970.20">
    <property type="entry name" value="Glycogen synthesis protein GlgS"/>
    <property type="match status" value="1"/>
</dbReference>
<dbReference type="HAMAP" id="MF_00525">
    <property type="entry name" value="GlgS"/>
    <property type="match status" value="1"/>
</dbReference>
<dbReference type="InterPro" id="IPR015065">
    <property type="entry name" value="GlgS"/>
</dbReference>
<dbReference type="InterPro" id="IPR036295">
    <property type="entry name" value="GlgS_sf"/>
</dbReference>
<dbReference type="NCBIfam" id="NF002793">
    <property type="entry name" value="PRK02922.1"/>
    <property type="match status" value="1"/>
</dbReference>
<dbReference type="Pfam" id="PF08971">
    <property type="entry name" value="GlgS"/>
    <property type="match status" value="1"/>
</dbReference>
<dbReference type="SUPFAM" id="SSF109747">
    <property type="entry name" value="Glycogen synthesis protein GlgS"/>
    <property type="match status" value="1"/>
</dbReference>
<protein>
    <recommendedName>
        <fullName evidence="1">Surface composition regulator</fullName>
    </recommendedName>
</protein>
<proteinExistence type="inferred from homology"/>
<reference key="1">
    <citation type="journal article" date="2002" name="Proc. Natl. Acad. Sci. U.S.A.">
        <title>Extensive mosaic structure revealed by the complete genome sequence of uropathogenic Escherichia coli.</title>
        <authorList>
            <person name="Welch R.A."/>
            <person name="Burland V."/>
            <person name="Plunkett G. III"/>
            <person name="Redford P."/>
            <person name="Roesch P."/>
            <person name="Rasko D."/>
            <person name="Buckles E.L."/>
            <person name="Liou S.-R."/>
            <person name="Boutin A."/>
            <person name="Hackett J."/>
            <person name="Stroud D."/>
            <person name="Mayhew G.F."/>
            <person name="Rose D.J."/>
            <person name="Zhou S."/>
            <person name="Schwartz D.C."/>
            <person name="Perna N.T."/>
            <person name="Mobley H.L.T."/>
            <person name="Donnenberg M.S."/>
            <person name="Blattner F.R."/>
        </authorList>
    </citation>
    <scope>NUCLEOTIDE SEQUENCE [LARGE SCALE GENOMIC DNA]</scope>
    <source>
        <strain>CFT073 / ATCC 700928 / UPEC</strain>
    </source>
</reference>